<evidence type="ECO:0000255" key="1">
    <source>
        <dbReference type="HAMAP-Rule" id="MF_00538"/>
    </source>
</evidence>
<gene>
    <name evidence="1" type="primary">arnF</name>
    <name type="ordered locus">PFL_3049</name>
</gene>
<accession>Q4KC78</accession>
<comment type="function">
    <text evidence="1">Translocates 4-amino-4-deoxy-L-arabinose-phosphoundecaprenol (alpha-L-Ara4N-phosphoundecaprenol) from the cytoplasmic to the periplasmic side of the inner membrane.</text>
</comment>
<comment type="pathway">
    <text evidence="1">Bacterial outer membrane biogenesis; lipopolysaccharide biosynthesis.</text>
</comment>
<comment type="subunit">
    <text evidence="1">Heterodimer of ArnE and ArnF.</text>
</comment>
<comment type="subcellular location">
    <subcellularLocation>
        <location evidence="1">Cell inner membrane</location>
        <topology evidence="1">Multi-pass membrane protein</topology>
    </subcellularLocation>
</comment>
<comment type="similarity">
    <text evidence="1">Belongs to the ArnF family.</text>
</comment>
<proteinExistence type="inferred from homology"/>
<name>ARNF_PSEF5</name>
<sequence>MSRARGFAFALGSVALVSGAQLGMRWSMTRLPAPDQWLPALSAGSVDLAALAVVAAAIAAYALSMLCWLLALRDLPLGRAYSLLSISYALVYLLAASLPLFNEPFTLSKTLGVALVILGVITINSRSAPATSPRNTP</sequence>
<reference key="1">
    <citation type="journal article" date="2005" name="Nat. Biotechnol.">
        <title>Complete genome sequence of the plant commensal Pseudomonas fluorescens Pf-5.</title>
        <authorList>
            <person name="Paulsen I.T."/>
            <person name="Press C.M."/>
            <person name="Ravel J."/>
            <person name="Kobayashi D.Y."/>
            <person name="Myers G.S.A."/>
            <person name="Mavrodi D.V."/>
            <person name="DeBoy R.T."/>
            <person name="Seshadri R."/>
            <person name="Ren Q."/>
            <person name="Madupu R."/>
            <person name="Dodson R.J."/>
            <person name="Durkin A.S."/>
            <person name="Brinkac L.M."/>
            <person name="Daugherty S.C."/>
            <person name="Sullivan S.A."/>
            <person name="Rosovitz M.J."/>
            <person name="Gwinn M.L."/>
            <person name="Zhou L."/>
            <person name="Schneider D.J."/>
            <person name="Cartinhour S.W."/>
            <person name="Nelson W.C."/>
            <person name="Weidman J."/>
            <person name="Watkins K."/>
            <person name="Tran K."/>
            <person name="Khouri H."/>
            <person name="Pierson E.A."/>
            <person name="Pierson L.S. III"/>
            <person name="Thomashow L.S."/>
            <person name="Loper J.E."/>
        </authorList>
    </citation>
    <scope>NUCLEOTIDE SEQUENCE [LARGE SCALE GENOMIC DNA]</scope>
    <source>
        <strain>ATCC BAA-477 / NRRL B-23932 / Pf-5</strain>
    </source>
</reference>
<organism>
    <name type="scientific">Pseudomonas fluorescens (strain ATCC BAA-477 / NRRL B-23932 / Pf-5)</name>
    <dbReference type="NCBI Taxonomy" id="220664"/>
    <lineage>
        <taxon>Bacteria</taxon>
        <taxon>Pseudomonadati</taxon>
        <taxon>Pseudomonadota</taxon>
        <taxon>Gammaproteobacteria</taxon>
        <taxon>Pseudomonadales</taxon>
        <taxon>Pseudomonadaceae</taxon>
        <taxon>Pseudomonas</taxon>
    </lineage>
</organism>
<dbReference type="EMBL" id="CP000076">
    <property type="protein sequence ID" value="AAY92319.1"/>
    <property type="molecule type" value="Genomic_DNA"/>
</dbReference>
<dbReference type="RefSeq" id="WP_011061337.1">
    <property type="nucleotide sequence ID" value="NC_004129.6"/>
</dbReference>
<dbReference type="SMR" id="Q4KC78"/>
<dbReference type="STRING" id="220664.PFL_3049"/>
<dbReference type="KEGG" id="pfl:PFL_3049"/>
<dbReference type="PATRIC" id="fig|220664.5.peg.3109"/>
<dbReference type="eggNOG" id="COG2076">
    <property type="taxonomic scope" value="Bacteria"/>
</dbReference>
<dbReference type="HOGENOM" id="CLU_131462_1_0_6"/>
<dbReference type="UniPathway" id="UPA00030"/>
<dbReference type="Proteomes" id="UP000008540">
    <property type="component" value="Chromosome"/>
</dbReference>
<dbReference type="GO" id="GO:0005886">
    <property type="term" value="C:plasma membrane"/>
    <property type="evidence" value="ECO:0007669"/>
    <property type="project" value="UniProtKB-SubCell"/>
</dbReference>
<dbReference type="GO" id="GO:1901505">
    <property type="term" value="F:carbohydrate derivative transmembrane transporter activity"/>
    <property type="evidence" value="ECO:0007669"/>
    <property type="project" value="InterPro"/>
</dbReference>
<dbReference type="GO" id="GO:0009245">
    <property type="term" value="P:lipid A biosynthetic process"/>
    <property type="evidence" value="ECO:0007669"/>
    <property type="project" value="UniProtKB-UniRule"/>
</dbReference>
<dbReference type="GO" id="GO:0009103">
    <property type="term" value="P:lipopolysaccharide biosynthetic process"/>
    <property type="evidence" value="ECO:0007669"/>
    <property type="project" value="UniProtKB-UniRule"/>
</dbReference>
<dbReference type="Gene3D" id="1.10.3730.20">
    <property type="match status" value="1"/>
</dbReference>
<dbReference type="HAMAP" id="MF_00538">
    <property type="entry name" value="Flippase_ArnF"/>
    <property type="match status" value="1"/>
</dbReference>
<dbReference type="InterPro" id="IPR022832">
    <property type="entry name" value="Flippase_ArnF"/>
</dbReference>
<dbReference type="InterPro" id="IPR000390">
    <property type="entry name" value="Small_drug/metabolite_transptr"/>
</dbReference>
<dbReference type="NCBIfam" id="NF002816">
    <property type="entry name" value="PRK02971.1-2"/>
    <property type="match status" value="1"/>
</dbReference>
<dbReference type="PANTHER" id="PTHR30561:SF9">
    <property type="entry name" value="4-AMINO-4-DEOXY-L-ARABINOSE-PHOSPHOUNDECAPRENOL FLIPPASE SUBUNIT ARNF-RELATED"/>
    <property type="match status" value="1"/>
</dbReference>
<dbReference type="PANTHER" id="PTHR30561">
    <property type="entry name" value="SMR FAMILY PROTON-DEPENDENT DRUG EFFLUX TRANSPORTER SUGE"/>
    <property type="match status" value="1"/>
</dbReference>
<dbReference type="SUPFAM" id="SSF103481">
    <property type="entry name" value="Multidrug resistance efflux transporter EmrE"/>
    <property type="match status" value="1"/>
</dbReference>
<feature type="chain" id="PRO_0000382012" description="Probable 4-amino-4-deoxy-L-arabinose-phosphoundecaprenol flippase subunit ArnF">
    <location>
        <begin position="1"/>
        <end position="137"/>
    </location>
</feature>
<feature type="topological domain" description="Cytoplasmic" evidence="1">
    <location>
        <begin position="1"/>
        <end position="5"/>
    </location>
</feature>
<feature type="transmembrane region" description="Helical" evidence="1">
    <location>
        <begin position="6"/>
        <end position="26"/>
    </location>
</feature>
<feature type="topological domain" description="Periplasmic" evidence="1">
    <location>
        <begin position="27"/>
        <end position="49"/>
    </location>
</feature>
<feature type="transmembrane region" description="Helical" evidence="1">
    <location>
        <begin position="50"/>
        <end position="70"/>
    </location>
</feature>
<feature type="topological domain" description="Cytoplasmic" evidence="1">
    <location>
        <begin position="71"/>
        <end position="80"/>
    </location>
</feature>
<feature type="transmembrane region" description="Helical" evidence="1">
    <location>
        <begin position="81"/>
        <end position="101"/>
    </location>
</feature>
<feature type="topological domain" description="Periplasmic" evidence="1">
    <location>
        <position position="102"/>
    </location>
</feature>
<feature type="transmembrane region" description="Helical" evidence="1">
    <location>
        <begin position="103"/>
        <end position="123"/>
    </location>
</feature>
<feature type="topological domain" description="Cytoplasmic" evidence="1">
    <location>
        <begin position="124"/>
        <end position="137"/>
    </location>
</feature>
<protein>
    <recommendedName>
        <fullName evidence="1">Probable 4-amino-4-deoxy-L-arabinose-phosphoundecaprenol flippase subunit ArnF</fullName>
        <shortName evidence="1">L-Ara4N-phosphoundecaprenol flippase subunit ArnF</shortName>
    </recommendedName>
    <alternativeName>
        <fullName evidence="1">Undecaprenyl phosphate-aminoarabinose flippase subunit ArnF</fullName>
    </alternativeName>
</protein>
<keyword id="KW-0997">Cell inner membrane</keyword>
<keyword id="KW-1003">Cell membrane</keyword>
<keyword id="KW-0441">Lipid A biosynthesis</keyword>
<keyword id="KW-0444">Lipid biosynthesis</keyword>
<keyword id="KW-0443">Lipid metabolism</keyword>
<keyword id="KW-0448">Lipopolysaccharide biosynthesis</keyword>
<keyword id="KW-0472">Membrane</keyword>
<keyword id="KW-0812">Transmembrane</keyword>
<keyword id="KW-1133">Transmembrane helix</keyword>
<keyword id="KW-0813">Transport</keyword>